<sequence length="137" mass="15183">MAPKAEKKPAEKKPTEEKAEKKPRAEKRVPGKEGGEKKGKKKAKKSVETYKIYIFKVLKQVHPDIGISSKAMSIMNSFINDIFEKLAAEAAKLARYNKKPTITSREIQTSVRLVLPGELAKHAVSEGTKAVTKFTSS</sequence>
<evidence type="ECO:0000250" key="1"/>
<evidence type="ECO:0000256" key="2">
    <source>
        <dbReference type="SAM" id="MobiDB-lite"/>
    </source>
</evidence>
<evidence type="ECO:0000305" key="3"/>
<organism>
    <name type="scientific">Zea mays</name>
    <name type="common">Maize</name>
    <dbReference type="NCBI Taxonomy" id="4577"/>
    <lineage>
        <taxon>Eukaryota</taxon>
        <taxon>Viridiplantae</taxon>
        <taxon>Streptophyta</taxon>
        <taxon>Embryophyta</taxon>
        <taxon>Tracheophyta</taxon>
        <taxon>Spermatophyta</taxon>
        <taxon>Magnoliopsida</taxon>
        <taxon>Liliopsida</taxon>
        <taxon>Poales</taxon>
        <taxon>Poaceae</taxon>
        <taxon>PACMAD clade</taxon>
        <taxon>Panicoideae</taxon>
        <taxon>Andropogonodae</taxon>
        <taxon>Andropogoneae</taxon>
        <taxon>Tripsacinae</taxon>
        <taxon>Zea</taxon>
    </lineage>
</organism>
<keyword id="KW-0007">Acetylation</keyword>
<keyword id="KW-0158">Chromosome</keyword>
<keyword id="KW-0238">DNA-binding</keyword>
<keyword id="KW-1017">Isopeptide bond</keyword>
<keyword id="KW-0544">Nucleosome core</keyword>
<keyword id="KW-0539">Nucleus</keyword>
<keyword id="KW-1185">Reference proteome</keyword>
<keyword id="KW-0832">Ubl conjugation</keyword>
<accession>P49120</accession>
<name>H2B4_MAIZE</name>
<proteinExistence type="inferred from homology"/>
<feature type="initiator methionine" description="Removed" evidence="1">
    <location>
        <position position="1"/>
    </location>
</feature>
<feature type="chain" id="PRO_0000071918" description="Histone H2B.4">
    <location>
        <begin position="2"/>
        <end position="137"/>
    </location>
</feature>
<feature type="region of interest" description="Disordered" evidence="2">
    <location>
        <begin position="1"/>
        <end position="45"/>
    </location>
</feature>
<feature type="compositionally biased region" description="Basic and acidic residues" evidence="2">
    <location>
        <begin position="1"/>
        <end position="37"/>
    </location>
</feature>
<feature type="modified residue" description="N6-acetyllysine" evidence="1">
    <location>
        <position position="7"/>
    </location>
</feature>
<feature type="modified residue" description="N6-acetyllysine" evidence="1">
    <location>
        <position position="27"/>
    </location>
</feature>
<feature type="cross-link" description="Glycyl lysine isopeptide (Lys-Gly) (interchain with G-Cter in ubiquitin)" evidence="1">
    <location>
        <position position="133"/>
    </location>
</feature>
<reference key="1">
    <citation type="journal article" date="1994" name="Physiol. Veg.">
        <title>Molecular cloning and sequence analysis of two genes encoding two histone H2B variants of maize.</title>
        <authorList>
            <person name="Joanin P."/>
            <person name="Gigot C."/>
            <person name="Phillipps G."/>
        </authorList>
    </citation>
    <scope>NUCLEOTIDE SEQUENCE [GENOMIC DNA]</scope>
    <source>
        <strain>cv. Wisconsin 22</strain>
    </source>
</reference>
<dbReference type="EMBL" id="X69961">
    <property type="protein sequence ID" value="CAA49585.1"/>
    <property type="molecule type" value="Genomic_DNA"/>
</dbReference>
<dbReference type="PIR" id="T02035">
    <property type="entry name" value="T02035"/>
</dbReference>
<dbReference type="RefSeq" id="NP_001141398.1">
    <property type="nucleotide sequence ID" value="NM_001147926.2"/>
</dbReference>
<dbReference type="SMR" id="P49120"/>
<dbReference type="FunCoup" id="P49120">
    <property type="interactions" value="1764"/>
</dbReference>
<dbReference type="STRING" id="4577.P49120"/>
<dbReference type="PaxDb" id="4577-GRMZM2G306258_P01"/>
<dbReference type="EnsemblPlants" id="Zm00001eb148540_T001">
    <property type="protein sequence ID" value="Zm00001eb148540_P001"/>
    <property type="gene ID" value="Zm00001eb148540"/>
</dbReference>
<dbReference type="GeneID" id="100273491"/>
<dbReference type="Gramene" id="Zm00001eb148540_T001">
    <property type="protein sequence ID" value="Zm00001eb148540_P001"/>
    <property type="gene ID" value="Zm00001eb148540"/>
</dbReference>
<dbReference type="KEGG" id="zma:100273491"/>
<dbReference type="MaizeGDB" id="65109"/>
<dbReference type="eggNOG" id="KOG1744">
    <property type="taxonomic scope" value="Eukaryota"/>
</dbReference>
<dbReference type="HOGENOM" id="CLU_075666_1_0_1"/>
<dbReference type="InParanoid" id="P49120"/>
<dbReference type="OMA" id="ELAKHAX"/>
<dbReference type="OrthoDB" id="684253at2759"/>
<dbReference type="Proteomes" id="UP000007305">
    <property type="component" value="Chromosome 3"/>
</dbReference>
<dbReference type="ExpressionAtlas" id="P49120">
    <property type="expression patterns" value="differential"/>
</dbReference>
<dbReference type="GO" id="GO:0000786">
    <property type="term" value="C:nucleosome"/>
    <property type="evidence" value="ECO:0007669"/>
    <property type="project" value="UniProtKB-KW"/>
</dbReference>
<dbReference type="GO" id="GO:0005634">
    <property type="term" value="C:nucleus"/>
    <property type="evidence" value="ECO:0007669"/>
    <property type="project" value="UniProtKB-SubCell"/>
</dbReference>
<dbReference type="GO" id="GO:0003677">
    <property type="term" value="F:DNA binding"/>
    <property type="evidence" value="ECO:0000318"/>
    <property type="project" value="GO_Central"/>
</dbReference>
<dbReference type="GO" id="GO:0046982">
    <property type="term" value="F:protein heterodimerization activity"/>
    <property type="evidence" value="ECO:0007669"/>
    <property type="project" value="InterPro"/>
</dbReference>
<dbReference type="GO" id="GO:0030527">
    <property type="term" value="F:structural constituent of chromatin"/>
    <property type="evidence" value="ECO:0007669"/>
    <property type="project" value="InterPro"/>
</dbReference>
<dbReference type="CDD" id="cd22910">
    <property type="entry name" value="HFD_H2B"/>
    <property type="match status" value="1"/>
</dbReference>
<dbReference type="FunFam" id="1.10.20.10:FF:000014">
    <property type="entry name" value="Histone H2B"/>
    <property type="match status" value="1"/>
</dbReference>
<dbReference type="Gene3D" id="1.10.20.10">
    <property type="entry name" value="Histone, subunit A"/>
    <property type="match status" value="1"/>
</dbReference>
<dbReference type="InterPro" id="IPR009072">
    <property type="entry name" value="Histone-fold"/>
</dbReference>
<dbReference type="InterPro" id="IPR007125">
    <property type="entry name" value="Histone_H2A/H2B/H3"/>
</dbReference>
<dbReference type="InterPro" id="IPR000558">
    <property type="entry name" value="Histone_H2B"/>
</dbReference>
<dbReference type="InterPro" id="IPR055333">
    <property type="entry name" value="HISTONE_H2B_site"/>
</dbReference>
<dbReference type="PANTHER" id="PTHR23428">
    <property type="entry name" value="HISTONE H2B"/>
    <property type="match status" value="1"/>
</dbReference>
<dbReference type="Pfam" id="PF00125">
    <property type="entry name" value="Histone"/>
    <property type="match status" value="1"/>
</dbReference>
<dbReference type="PRINTS" id="PR00621">
    <property type="entry name" value="HISTONEH2B"/>
</dbReference>
<dbReference type="SMART" id="SM00427">
    <property type="entry name" value="H2B"/>
    <property type="match status" value="1"/>
</dbReference>
<dbReference type="SUPFAM" id="SSF47113">
    <property type="entry name" value="Histone-fold"/>
    <property type="match status" value="1"/>
</dbReference>
<dbReference type="PROSITE" id="PS00357">
    <property type="entry name" value="HISTONE_H2B"/>
    <property type="match status" value="1"/>
</dbReference>
<comment type="function">
    <text>Core component of nucleosome. Nucleosomes wrap and compact DNA into chromatin, limiting DNA accessibility to the cellular machineries which require DNA as a template. Histones thereby play a central role in transcription regulation, DNA repair, DNA replication and chromosomal stability. DNA accessibility is regulated via a complex set of post-translational modifications of histones, also called histone code, and nucleosome remodeling.</text>
</comment>
<comment type="subunit">
    <text>The nucleosome is a histone octamer containing two molecules each of H2A, H2B, H3 and H4 assembled in one H3-H4 heterotetramer and two H2A-H2B heterodimers. The octamer wraps approximately 147 bp of DNA.</text>
</comment>
<comment type="subcellular location">
    <subcellularLocation>
        <location>Nucleus</location>
    </subcellularLocation>
    <subcellularLocation>
        <location>Chromosome</location>
    </subcellularLocation>
</comment>
<comment type="PTM">
    <text evidence="1">Can be acetylated to form H2BK6ac and H2BK33ac.</text>
</comment>
<comment type="PTM">
    <text evidence="1">Monoubiquitinated to form H2BK143ub1; may give a specific tag for epigenetic transcriptional activation.</text>
</comment>
<comment type="similarity">
    <text evidence="3">Belongs to the histone H2B family.</text>
</comment>
<comment type="caution">
    <text evidence="3">To ensure consistency between histone entries, we follow the 'Brno' nomenclature for histone modifications, with positions referring to those used in the literature for the 'closest' model organism. Due to slight variations in histone sequences between organisms and to the presence of initiator methionine in UniProtKB/Swiss-Prot sequences, the actual positions of modified amino acids in the sequence generally differ. In this entry the following conventions are used: H2BK6ac = acetylated Lys-7; H2BK33ac = acetylated Lys-27; H2BK143ub1 = monoubiquitinated Lys-133.</text>
</comment>
<protein>
    <recommendedName>
        <fullName>Histone H2B.4</fullName>
    </recommendedName>
</protein>